<reference key="1">
    <citation type="submission" date="1996-10" db="EMBL/GenBank/DDBJ databases">
        <title>A member of the Rab18-family from Arabidopsis thaliana.</title>
        <authorList>
            <person name="Bischoff F."/>
            <person name="Palme K."/>
        </authorList>
    </citation>
    <scope>NUCLEOTIDE SEQUENCE [MRNA]</scope>
    <source>
        <strain>cv. Columbia</strain>
    </source>
</reference>
<reference key="2">
    <citation type="journal article" date="2000" name="Nature">
        <title>Sequence and analysis of chromosome 1 of the plant Arabidopsis thaliana.</title>
        <authorList>
            <person name="Theologis A."/>
            <person name="Ecker J.R."/>
            <person name="Palm C.J."/>
            <person name="Federspiel N.A."/>
            <person name="Kaul S."/>
            <person name="White O."/>
            <person name="Alonso J."/>
            <person name="Altafi H."/>
            <person name="Araujo R."/>
            <person name="Bowman C.L."/>
            <person name="Brooks S.Y."/>
            <person name="Buehler E."/>
            <person name="Chan A."/>
            <person name="Chao Q."/>
            <person name="Chen H."/>
            <person name="Cheuk R.F."/>
            <person name="Chin C.W."/>
            <person name="Chung M.K."/>
            <person name="Conn L."/>
            <person name="Conway A.B."/>
            <person name="Conway A.R."/>
            <person name="Creasy T.H."/>
            <person name="Dewar K."/>
            <person name="Dunn P."/>
            <person name="Etgu P."/>
            <person name="Feldblyum T.V."/>
            <person name="Feng J.-D."/>
            <person name="Fong B."/>
            <person name="Fujii C.Y."/>
            <person name="Gill J.E."/>
            <person name="Goldsmith A.D."/>
            <person name="Haas B."/>
            <person name="Hansen N.F."/>
            <person name="Hughes B."/>
            <person name="Huizar L."/>
            <person name="Hunter J.L."/>
            <person name="Jenkins J."/>
            <person name="Johnson-Hopson C."/>
            <person name="Khan S."/>
            <person name="Khaykin E."/>
            <person name="Kim C.J."/>
            <person name="Koo H.L."/>
            <person name="Kremenetskaia I."/>
            <person name="Kurtz D.B."/>
            <person name="Kwan A."/>
            <person name="Lam B."/>
            <person name="Langin-Hooper S."/>
            <person name="Lee A."/>
            <person name="Lee J.M."/>
            <person name="Lenz C.A."/>
            <person name="Li J.H."/>
            <person name="Li Y.-P."/>
            <person name="Lin X."/>
            <person name="Liu S.X."/>
            <person name="Liu Z.A."/>
            <person name="Luros J.S."/>
            <person name="Maiti R."/>
            <person name="Marziali A."/>
            <person name="Militscher J."/>
            <person name="Miranda M."/>
            <person name="Nguyen M."/>
            <person name="Nierman W.C."/>
            <person name="Osborne B.I."/>
            <person name="Pai G."/>
            <person name="Peterson J."/>
            <person name="Pham P.K."/>
            <person name="Rizzo M."/>
            <person name="Rooney T."/>
            <person name="Rowley D."/>
            <person name="Sakano H."/>
            <person name="Salzberg S.L."/>
            <person name="Schwartz J.R."/>
            <person name="Shinn P."/>
            <person name="Southwick A.M."/>
            <person name="Sun H."/>
            <person name="Tallon L.J."/>
            <person name="Tambunga G."/>
            <person name="Toriumi M.J."/>
            <person name="Town C.D."/>
            <person name="Utterback T."/>
            <person name="Van Aken S."/>
            <person name="Vaysberg M."/>
            <person name="Vysotskaia V.S."/>
            <person name="Walker M."/>
            <person name="Wu D."/>
            <person name="Yu G."/>
            <person name="Fraser C.M."/>
            <person name="Venter J.C."/>
            <person name="Davis R.W."/>
        </authorList>
    </citation>
    <scope>NUCLEOTIDE SEQUENCE [LARGE SCALE GENOMIC DNA]</scope>
    <source>
        <strain>cv. Columbia</strain>
    </source>
</reference>
<reference key="3">
    <citation type="journal article" date="2017" name="Plant J.">
        <title>Araport11: a complete reannotation of the Arabidopsis thaliana reference genome.</title>
        <authorList>
            <person name="Cheng C.Y."/>
            <person name="Krishnakumar V."/>
            <person name="Chan A.P."/>
            <person name="Thibaud-Nissen F."/>
            <person name="Schobel S."/>
            <person name="Town C.D."/>
        </authorList>
    </citation>
    <scope>GENOME REANNOTATION</scope>
    <source>
        <strain>cv. Columbia</strain>
    </source>
</reference>
<reference key="4">
    <citation type="journal article" date="2003" name="Science">
        <title>Empirical analysis of transcriptional activity in the Arabidopsis genome.</title>
        <authorList>
            <person name="Yamada K."/>
            <person name="Lim J."/>
            <person name="Dale J.M."/>
            <person name="Chen H."/>
            <person name="Shinn P."/>
            <person name="Palm C.J."/>
            <person name="Southwick A.M."/>
            <person name="Wu H.C."/>
            <person name="Kim C.J."/>
            <person name="Nguyen M."/>
            <person name="Pham P.K."/>
            <person name="Cheuk R.F."/>
            <person name="Karlin-Newmann G."/>
            <person name="Liu S.X."/>
            <person name="Lam B."/>
            <person name="Sakano H."/>
            <person name="Wu T."/>
            <person name="Yu G."/>
            <person name="Miranda M."/>
            <person name="Quach H.L."/>
            <person name="Tripp M."/>
            <person name="Chang C.H."/>
            <person name="Lee J.M."/>
            <person name="Toriumi M.J."/>
            <person name="Chan M.M."/>
            <person name="Tang C.C."/>
            <person name="Onodera C.S."/>
            <person name="Deng J.M."/>
            <person name="Akiyama K."/>
            <person name="Ansari Y."/>
            <person name="Arakawa T."/>
            <person name="Banh J."/>
            <person name="Banno F."/>
            <person name="Bowser L."/>
            <person name="Brooks S.Y."/>
            <person name="Carninci P."/>
            <person name="Chao Q."/>
            <person name="Choy N."/>
            <person name="Enju A."/>
            <person name="Goldsmith A.D."/>
            <person name="Gurjal M."/>
            <person name="Hansen N.F."/>
            <person name="Hayashizaki Y."/>
            <person name="Johnson-Hopson C."/>
            <person name="Hsuan V.W."/>
            <person name="Iida K."/>
            <person name="Karnes M."/>
            <person name="Khan S."/>
            <person name="Koesema E."/>
            <person name="Ishida J."/>
            <person name="Jiang P.X."/>
            <person name="Jones T."/>
            <person name="Kawai J."/>
            <person name="Kamiya A."/>
            <person name="Meyers C."/>
            <person name="Nakajima M."/>
            <person name="Narusaka M."/>
            <person name="Seki M."/>
            <person name="Sakurai T."/>
            <person name="Satou M."/>
            <person name="Tamse R."/>
            <person name="Vaysberg M."/>
            <person name="Wallender E.K."/>
            <person name="Wong C."/>
            <person name="Yamamura Y."/>
            <person name="Yuan S."/>
            <person name="Shinozaki K."/>
            <person name="Davis R.W."/>
            <person name="Theologis A."/>
            <person name="Ecker J.R."/>
        </authorList>
    </citation>
    <scope>NUCLEOTIDE SEQUENCE [LARGE SCALE MRNA]</scope>
    <source>
        <strain>cv. Columbia</strain>
    </source>
</reference>
<reference key="5">
    <citation type="submission" date="2006-07" db="EMBL/GenBank/DDBJ databases">
        <title>Large-scale analysis of RIKEN Arabidopsis full-length (RAFL) cDNAs.</title>
        <authorList>
            <person name="Totoki Y."/>
            <person name="Seki M."/>
            <person name="Ishida J."/>
            <person name="Nakajima M."/>
            <person name="Enju A."/>
            <person name="Kamiya A."/>
            <person name="Narusaka M."/>
            <person name="Shin-i T."/>
            <person name="Nakagawa M."/>
            <person name="Sakamoto N."/>
            <person name="Oishi K."/>
            <person name="Kohara Y."/>
            <person name="Kobayashi M."/>
            <person name="Toyoda A."/>
            <person name="Sakaki Y."/>
            <person name="Sakurai T."/>
            <person name="Iida K."/>
            <person name="Akiyama K."/>
            <person name="Satou M."/>
            <person name="Toyoda T."/>
            <person name="Konagaya A."/>
            <person name="Carninci P."/>
            <person name="Kawai J."/>
            <person name="Hayashizaki Y."/>
            <person name="Shinozaki K."/>
        </authorList>
    </citation>
    <scope>NUCLEOTIDE SEQUENCE [LARGE SCALE MRNA]</scope>
    <source>
        <strain>cv. Columbia</strain>
    </source>
</reference>
<reference key="6">
    <citation type="submission" date="2002-03" db="EMBL/GenBank/DDBJ databases">
        <title>Full-length cDNA from Arabidopsis thaliana.</title>
        <authorList>
            <person name="Brover V.V."/>
            <person name="Troukhan M.E."/>
            <person name="Alexandrov N.A."/>
            <person name="Lu Y.-P."/>
            <person name="Flavell R.B."/>
            <person name="Feldmann K.A."/>
        </authorList>
    </citation>
    <scope>NUCLEOTIDE SEQUENCE [LARGE SCALE MRNA]</scope>
</reference>
<reference key="7">
    <citation type="journal article" date="2003" name="Plant Physiol.">
        <title>Analysis of the small GTPase gene superfamily of Arabidopsis.</title>
        <authorList>
            <person name="Vernoud V."/>
            <person name="Horton A.C."/>
            <person name="Yang Z."/>
            <person name="Nielsen E."/>
        </authorList>
    </citation>
    <scope>GENE FAMILY</scope>
    <scope>NOMENCLATURE</scope>
</reference>
<reference key="8">
    <citation type="journal article" date="2012" name="Mol. Cell. Proteomics">
        <title>Comparative large-scale characterisation of plant vs. mammal proteins reveals similar and idiosyncratic N-alpha acetylation features.</title>
        <authorList>
            <person name="Bienvenut W.V."/>
            <person name="Sumpton D."/>
            <person name="Martinez A."/>
            <person name="Lilla S."/>
            <person name="Espagne C."/>
            <person name="Meinnel T."/>
            <person name="Giglione C."/>
        </authorList>
    </citation>
    <scope>ACETYLATION [LARGE SCALE ANALYSIS] AT GLY-2</scope>
    <scope>CLEAVAGE OF INITIATOR METHIONINE [LARGE SCALE ANALYSIS]</scope>
    <scope>IDENTIFICATION BY MASS SPECTROMETRY [LARGE SCALE ANALYSIS]</scope>
</reference>
<protein>
    <recommendedName>
        <fullName>Ras-related protein RABC1</fullName>
        <shortName>AtRABC1</shortName>
    </recommendedName>
    <alternativeName>
        <fullName>Ras-related protein Rab18</fullName>
        <shortName>AtRab18</shortName>
    </alternativeName>
</protein>
<dbReference type="EMBL" id="U75603">
    <property type="protein sequence ID" value="AAB61997.1"/>
    <property type="molecule type" value="mRNA"/>
</dbReference>
<dbReference type="EMBL" id="AC006423">
    <property type="protein sequence ID" value="AAF63103.1"/>
    <property type="molecule type" value="Genomic_DNA"/>
</dbReference>
<dbReference type="EMBL" id="AC022314">
    <property type="protein sequence ID" value="AAF79660.1"/>
    <property type="status" value="ALT_SEQ"/>
    <property type="molecule type" value="Genomic_DNA"/>
</dbReference>
<dbReference type="EMBL" id="CP002684">
    <property type="protein sequence ID" value="AEE32003.1"/>
    <property type="molecule type" value="Genomic_DNA"/>
</dbReference>
<dbReference type="EMBL" id="CP002684">
    <property type="protein sequence ID" value="AEE32004.1"/>
    <property type="molecule type" value="Genomic_DNA"/>
</dbReference>
<dbReference type="EMBL" id="CP002684">
    <property type="protein sequence ID" value="AEE32005.1"/>
    <property type="molecule type" value="Genomic_DNA"/>
</dbReference>
<dbReference type="EMBL" id="AF370263">
    <property type="protein sequence ID" value="AAK44078.1"/>
    <property type="molecule type" value="mRNA"/>
</dbReference>
<dbReference type="EMBL" id="AY063080">
    <property type="protein sequence ID" value="AAL34254.1"/>
    <property type="molecule type" value="mRNA"/>
</dbReference>
<dbReference type="EMBL" id="AK227664">
    <property type="protein sequence ID" value="BAE99651.1"/>
    <property type="molecule type" value="mRNA"/>
</dbReference>
<dbReference type="EMBL" id="AY086878">
    <property type="protein sequence ID" value="AAM63924.1"/>
    <property type="molecule type" value="mRNA"/>
</dbReference>
<dbReference type="PIR" id="A96503">
    <property type="entry name" value="A96503"/>
</dbReference>
<dbReference type="RefSeq" id="NP_001077675.1">
    <property type="nucleotide sequence ID" value="NM_001084206.1"/>
</dbReference>
<dbReference type="RefSeq" id="NP_001117435.1">
    <property type="nucleotide sequence ID" value="NM_001123963.1"/>
</dbReference>
<dbReference type="RefSeq" id="NP_175056.1">
    <property type="nucleotide sequence ID" value="NM_103516.4"/>
</dbReference>
<dbReference type="SMR" id="O23657"/>
<dbReference type="BioGRID" id="26212">
    <property type="interactions" value="1"/>
</dbReference>
<dbReference type="FunCoup" id="O23657">
    <property type="interactions" value="4031"/>
</dbReference>
<dbReference type="IntAct" id="O23657">
    <property type="interactions" value="4"/>
</dbReference>
<dbReference type="MINT" id="O23657"/>
<dbReference type="STRING" id="3702.O23657"/>
<dbReference type="iPTMnet" id="O23657"/>
<dbReference type="PaxDb" id="3702-AT1G43890.1"/>
<dbReference type="ProteomicsDB" id="236498"/>
<dbReference type="EnsemblPlants" id="AT1G43890.1">
    <property type="protein sequence ID" value="AT1G43890.1"/>
    <property type="gene ID" value="AT1G43890"/>
</dbReference>
<dbReference type="EnsemblPlants" id="AT1G43890.2">
    <property type="protein sequence ID" value="AT1G43890.2"/>
    <property type="gene ID" value="AT1G43890"/>
</dbReference>
<dbReference type="EnsemblPlants" id="AT1G43890.3">
    <property type="protein sequence ID" value="AT1G43890.3"/>
    <property type="gene ID" value="AT1G43890"/>
</dbReference>
<dbReference type="GeneID" id="840987"/>
<dbReference type="Gramene" id="AT1G43890.1">
    <property type="protein sequence ID" value="AT1G43890.1"/>
    <property type="gene ID" value="AT1G43890"/>
</dbReference>
<dbReference type="Gramene" id="AT1G43890.2">
    <property type="protein sequence ID" value="AT1G43890.2"/>
    <property type="gene ID" value="AT1G43890"/>
</dbReference>
<dbReference type="Gramene" id="AT1G43890.3">
    <property type="protein sequence ID" value="AT1G43890.3"/>
    <property type="gene ID" value="AT1G43890"/>
</dbReference>
<dbReference type="KEGG" id="ath:AT1G43890"/>
<dbReference type="Araport" id="AT1G43890"/>
<dbReference type="TAIR" id="AT1G43890">
    <property type="gene designation" value="RAB18"/>
</dbReference>
<dbReference type="eggNOG" id="KOG0080">
    <property type="taxonomic scope" value="Eukaryota"/>
</dbReference>
<dbReference type="HOGENOM" id="CLU_041217_10_1_1"/>
<dbReference type="InParanoid" id="O23657"/>
<dbReference type="OMA" id="RVHKMDV"/>
<dbReference type="PhylomeDB" id="O23657"/>
<dbReference type="CD-CODE" id="4299E36E">
    <property type="entry name" value="Nucleolus"/>
</dbReference>
<dbReference type="PRO" id="PR:O23657"/>
<dbReference type="Proteomes" id="UP000006548">
    <property type="component" value="Chromosome 1"/>
</dbReference>
<dbReference type="ExpressionAtlas" id="O23657">
    <property type="expression patterns" value="baseline and differential"/>
</dbReference>
<dbReference type="GO" id="GO:0005634">
    <property type="term" value="C:nucleus"/>
    <property type="evidence" value="ECO:0007005"/>
    <property type="project" value="TAIR"/>
</dbReference>
<dbReference type="GO" id="GO:0005886">
    <property type="term" value="C:plasma membrane"/>
    <property type="evidence" value="ECO:0007005"/>
    <property type="project" value="TAIR"/>
</dbReference>
<dbReference type="GO" id="GO:0005525">
    <property type="term" value="F:GTP binding"/>
    <property type="evidence" value="ECO:0007669"/>
    <property type="project" value="UniProtKB-KW"/>
</dbReference>
<dbReference type="GO" id="GO:0003924">
    <property type="term" value="F:GTPase activity"/>
    <property type="evidence" value="ECO:0007669"/>
    <property type="project" value="InterPro"/>
</dbReference>
<dbReference type="GO" id="GO:0015031">
    <property type="term" value="P:protein transport"/>
    <property type="evidence" value="ECO:0007669"/>
    <property type="project" value="UniProtKB-KW"/>
</dbReference>
<dbReference type="CDD" id="cd01863">
    <property type="entry name" value="Rab18"/>
    <property type="match status" value="1"/>
</dbReference>
<dbReference type="FunFam" id="3.40.50.300:FF:000456">
    <property type="entry name" value="Ras-related protein RABC1"/>
    <property type="match status" value="1"/>
</dbReference>
<dbReference type="Gene3D" id="3.40.50.300">
    <property type="entry name" value="P-loop containing nucleotide triphosphate hydrolases"/>
    <property type="match status" value="1"/>
</dbReference>
<dbReference type="InterPro" id="IPR027417">
    <property type="entry name" value="P-loop_NTPase"/>
</dbReference>
<dbReference type="InterPro" id="IPR050227">
    <property type="entry name" value="Rab"/>
</dbReference>
<dbReference type="InterPro" id="IPR005225">
    <property type="entry name" value="Small_GTP-bd"/>
</dbReference>
<dbReference type="InterPro" id="IPR001806">
    <property type="entry name" value="Small_GTPase"/>
</dbReference>
<dbReference type="NCBIfam" id="TIGR00231">
    <property type="entry name" value="small_GTP"/>
    <property type="match status" value="1"/>
</dbReference>
<dbReference type="PANTHER" id="PTHR47977">
    <property type="entry name" value="RAS-RELATED PROTEIN RAB"/>
    <property type="match status" value="1"/>
</dbReference>
<dbReference type="Pfam" id="PF00071">
    <property type="entry name" value="Ras"/>
    <property type="match status" value="1"/>
</dbReference>
<dbReference type="PRINTS" id="PR00449">
    <property type="entry name" value="RASTRNSFRMNG"/>
</dbReference>
<dbReference type="SMART" id="SM00177">
    <property type="entry name" value="ARF"/>
    <property type="match status" value="1"/>
</dbReference>
<dbReference type="SMART" id="SM00175">
    <property type="entry name" value="RAB"/>
    <property type="match status" value="1"/>
</dbReference>
<dbReference type="SMART" id="SM00176">
    <property type="entry name" value="RAN"/>
    <property type="match status" value="1"/>
</dbReference>
<dbReference type="SMART" id="SM00173">
    <property type="entry name" value="RAS"/>
    <property type="match status" value="1"/>
</dbReference>
<dbReference type="SMART" id="SM00174">
    <property type="entry name" value="RHO"/>
    <property type="match status" value="1"/>
</dbReference>
<dbReference type="SUPFAM" id="SSF52540">
    <property type="entry name" value="P-loop containing nucleoside triphosphate hydrolases"/>
    <property type="match status" value="1"/>
</dbReference>
<dbReference type="PROSITE" id="PS51419">
    <property type="entry name" value="RAB"/>
    <property type="match status" value="1"/>
</dbReference>
<evidence type="ECO:0000250" key="1"/>
<evidence type="ECO:0000256" key="2">
    <source>
        <dbReference type="SAM" id="MobiDB-lite"/>
    </source>
</evidence>
<evidence type="ECO:0000305" key="3"/>
<evidence type="ECO:0007744" key="4">
    <source>
    </source>
</evidence>
<organism>
    <name type="scientific">Arabidopsis thaliana</name>
    <name type="common">Mouse-ear cress</name>
    <dbReference type="NCBI Taxonomy" id="3702"/>
    <lineage>
        <taxon>Eukaryota</taxon>
        <taxon>Viridiplantae</taxon>
        <taxon>Streptophyta</taxon>
        <taxon>Embryophyta</taxon>
        <taxon>Tracheophyta</taxon>
        <taxon>Spermatophyta</taxon>
        <taxon>Magnoliopsida</taxon>
        <taxon>eudicotyledons</taxon>
        <taxon>Gunneridae</taxon>
        <taxon>Pentapetalae</taxon>
        <taxon>rosids</taxon>
        <taxon>malvids</taxon>
        <taxon>Brassicales</taxon>
        <taxon>Brassicaceae</taxon>
        <taxon>Camelineae</taxon>
        <taxon>Arabidopsis</taxon>
    </lineage>
</organism>
<proteinExistence type="evidence at protein level"/>
<sequence length="212" mass="23531">MGSSSGQPEFDYLFKVLLIGDSGVGKSSLLLSFTSNTFDDLSPTIGVDFKVKYLTIGEKKLKLAIWDTAGQERFRTLTSSYYRGAQGIIMVYDVTRRDTFTNLSDIWAKEIDLYSTNQDCIKMLVGNKVDKESERAVSKKEGIDFAREYGCLFLECSAKTRVNVEQCFEELVLKILETPSLTAEGSSGGKKNIFKQNPAQTTSTSSSYCCSS</sequence>
<accession>O23657</accession>
<accession>Q9LP15</accession>
<name>RABC1_ARATH</name>
<feature type="initiator methionine" description="Removed" evidence="4">
    <location>
        <position position="1"/>
    </location>
</feature>
<feature type="chain" id="PRO_0000407357" description="Ras-related protein RABC1">
    <location>
        <begin position="2"/>
        <end position="212"/>
    </location>
</feature>
<feature type="region of interest" description="Disordered" evidence="2">
    <location>
        <begin position="182"/>
        <end position="212"/>
    </location>
</feature>
<feature type="short sequence motif" description="Effector region" evidence="1">
    <location>
        <begin position="41"/>
        <end position="49"/>
    </location>
</feature>
<feature type="compositionally biased region" description="Low complexity" evidence="2">
    <location>
        <begin position="201"/>
        <end position="212"/>
    </location>
</feature>
<feature type="binding site" evidence="1">
    <location>
        <begin position="20"/>
        <end position="27"/>
    </location>
    <ligand>
        <name>GTP</name>
        <dbReference type="ChEBI" id="CHEBI:37565"/>
    </ligand>
</feature>
<feature type="binding site" evidence="1">
    <location>
        <begin position="67"/>
        <end position="71"/>
    </location>
    <ligand>
        <name>GTP</name>
        <dbReference type="ChEBI" id="CHEBI:37565"/>
    </ligand>
</feature>
<feature type="binding site" evidence="1">
    <location>
        <begin position="127"/>
        <end position="130"/>
    </location>
    <ligand>
        <name>GTP</name>
        <dbReference type="ChEBI" id="CHEBI:37565"/>
    </ligand>
</feature>
<feature type="binding site" evidence="1">
    <location>
        <begin position="157"/>
        <end position="158"/>
    </location>
    <ligand>
        <name>GTP</name>
        <dbReference type="ChEBI" id="CHEBI:37565"/>
    </ligand>
</feature>
<feature type="modified residue" description="N-acetylglycine" evidence="4">
    <location>
        <position position="2"/>
    </location>
</feature>
<feature type="lipid moiety-binding region" description="S-geranylgeranyl cysteine" evidence="1">
    <location>
        <position position="209"/>
    </location>
</feature>
<feature type="lipid moiety-binding region" description="S-geranylgeranyl cysteine" evidence="1">
    <location>
        <position position="210"/>
    </location>
</feature>
<gene>
    <name type="primary">RABC1</name>
    <name type="synonym">RAB18</name>
    <name type="synonym">RAB18-1</name>
    <name type="ordered locus">At1g43890</name>
    <name type="ORF">F28H19.15</name>
    <name type="ORF">F9C16.3</name>
</gene>
<comment type="function">
    <text evidence="1">Intracellular vesicle trafficking and protein transport.</text>
</comment>
<comment type="interaction">
    <interactant intactId="EBI-8519789">
        <id>O23657</id>
    </interactant>
    <interactant intactId="EBI-2107143">
        <id>Q38997</id>
        <label>KIN10</label>
    </interactant>
    <organismsDiffer>false</organismsDiffer>
    <experiments>2</experiments>
</comment>
<comment type="subcellular location">
    <subcellularLocation>
        <location evidence="3">Cell membrane</location>
        <topology evidence="3">Lipid-anchor</topology>
        <orientation evidence="3">Cytoplasmic side</orientation>
    </subcellularLocation>
</comment>
<comment type="similarity">
    <text evidence="3">Belongs to the small GTPase superfamily. Rab family.</text>
</comment>
<comment type="sequence caution" evidence="3">
    <conflict type="erroneous gene model prediction">
        <sequence resource="EMBL-CDS" id="AAF79660"/>
    </conflict>
</comment>
<keyword id="KW-0007">Acetylation</keyword>
<keyword id="KW-1003">Cell membrane</keyword>
<keyword id="KW-0342">GTP-binding</keyword>
<keyword id="KW-0449">Lipoprotein</keyword>
<keyword id="KW-0472">Membrane</keyword>
<keyword id="KW-0547">Nucleotide-binding</keyword>
<keyword id="KW-0636">Prenylation</keyword>
<keyword id="KW-0653">Protein transport</keyword>
<keyword id="KW-1185">Reference proteome</keyword>
<keyword id="KW-0813">Transport</keyword>